<reference key="1">
    <citation type="journal article" date="2006" name="Science">
        <title>Genome of rice cluster I archaea -- the key methane producers in the rice rhizosphere.</title>
        <authorList>
            <person name="Erkel C."/>
            <person name="Kube M."/>
            <person name="Reinhardt R."/>
            <person name="Liesack W."/>
        </authorList>
    </citation>
    <scope>NUCLEOTIDE SEQUENCE [LARGE SCALE GENOMIC DNA]</scope>
    <source>
        <strain>DSM 22066 / NBRC 105507 / MRE50</strain>
    </source>
</reference>
<organism>
    <name type="scientific">Methanocella arvoryzae (strain DSM 22066 / NBRC 105507 / MRE50)</name>
    <dbReference type="NCBI Taxonomy" id="351160"/>
    <lineage>
        <taxon>Archaea</taxon>
        <taxon>Methanobacteriati</taxon>
        <taxon>Methanobacteriota</taxon>
        <taxon>Stenosarchaea group</taxon>
        <taxon>Methanomicrobia</taxon>
        <taxon>Methanocellales</taxon>
        <taxon>Methanocellaceae</taxon>
        <taxon>Methanocella</taxon>
    </lineage>
</organism>
<keyword id="KW-0285">Flavoprotein</keyword>
<keyword id="KW-0288">FMN</keyword>
<keyword id="KW-0418">Kinase</keyword>
<keyword id="KW-0460">Magnesium</keyword>
<keyword id="KW-0479">Metal-binding</keyword>
<keyword id="KW-0547">Nucleotide-binding</keyword>
<keyword id="KW-1185">Reference proteome</keyword>
<keyword id="KW-0808">Transferase</keyword>
<gene>
    <name type="primary">ribK</name>
    <name type="ordered locus">UNCMA_21500</name>
    <name type="ORF">RCIX631</name>
</gene>
<evidence type="ECO:0000250" key="1"/>
<evidence type="ECO:0000305" key="2"/>
<sequence>MRSIMEVETLKRLALMGANKEQVSLSSSIFATSLGMSPQTAARRLSALEEDGYITRVVTPEGQKVRITEKGITCLKSEYRDYCSIFEDGGAPVMRGKVVTGLGEGQYYISLDGYRNQFNDKLGFDPYPGTLNVRLTEPFIPAEHEAVVIAGFKGENRTFGGCKCYPVRIKGVRAAIIRPDRTSYPPNLIEIIAPIKLRESLGLRDGDEVEVTLE</sequence>
<feature type="chain" id="PRO_0000322109" description="Riboflavin kinase">
    <location>
        <begin position="1"/>
        <end position="214"/>
    </location>
</feature>
<feature type="region of interest" description="H-T-H motif-like">
    <location>
        <begin position="1"/>
        <end position="91"/>
    </location>
</feature>
<feature type="region of interest" description="Riboflavin kinase">
    <location>
        <begin position="92"/>
        <end position="214"/>
    </location>
</feature>
<feature type="binding site" evidence="1">
    <location>
        <begin position="101"/>
        <end position="106"/>
    </location>
    <ligand>
        <name>CDP</name>
        <dbReference type="ChEBI" id="CHEBI:58069"/>
    </ligand>
</feature>
<feature type="binding site" evidence="1">
    <location>
        <position position="130"/>
    </location>
    <ligand>
        <name>Mg(2+)</name>
        <dbReference type="ChEBI" id="CHEBI:18420"/>
    </ligand>
</feature>
<feature type="binding site" evidence="1">
    <location>
        <position position="132"/>
    </location>
    <ligand>
        <name>Mg(2+)</name>
        <dbReference type="ChEBI" id="CHEBI:18420"/>
    </ligand>
</feature>
<feature type="binding site" evidence="1">
    <location>
        <position position="182"/>
    </location>
    <ligand>
        <name>FMN</name>
        <dbReference type="ChEBI" id="CHEBI:58210"/>
    </ligand>
</feature>
<feature type="binding site" evidence="1">
    <location>
        <position position="190"/>
    </location>
    <ligand>
        <name>FMN</name>
        <dbReference type="ChEBI" id="CHEBI:58210"/>
    </ligand>
</feature>
<feature type="binding site" evidence="1">
    <location>
        <begin position="195"/>
        <end position="198"/>
    </location>
    <ligand>
        <name>CDP</name>
        <dbReference type="ChEBI" id="CHEBI:58069"/>
    </ligand>
</feature>
<dbReference type="EC" id="2.7.1.161"/>
<dbReference type="EMBL" id="AM114193">
    <property type="protein sequence ID" value="CAJ36036.1"/>
    <property type="molecule type" value="Genomic_DNA"/>
</dbReference>
<dbReference type="SMR" id="Q0W6F7"/>
<dbReference type="STRING" id="351160.RCIX631"/>
<dbReference type="KEGG" id="rci:RCIX631"/>
<dbReference type="PATRIC" id="fig|351160.9.peg.2200"/>
<dbReference type="eggNOG" id="arCOG01904">
    <property type="taxonomic scope" value="Archaea"/>
</dbReference>
<dbReference type="OrthoDB" id="30955at2157"/>
<dbReference type="UniPathway" id="UPA00276">
    <property type="reaction ID" value="UER00929"/>
</dbReference>
<dbReference type="Proteomes" id="UP000000663">
    <property type="component" value="Chromosome"/>
</dbReference>
<dbReference type="GO" id="GO:0000287">
    <property type="term" value="F:magnesium ion binding"/>
    <property type="evidence" value="ECO:0007669"/>
    <property type="project" value="UniProtKB-UniRule"/>
</dbReference>
<dbReference type="GO" id="GO:0000166">
    <property type="term" value="F:nucleotide binding"/>
    <property type="evidence" value="ECO:0007669"/>
    <property type="project" value="UniProtKB-UniRule"/>
</dbReference>
<dbReference type="GO" id="GO:0008531">
    <property type="term" value="F:riboflavin kinase activity"/>
    <property type="evidence" value="ECO:0007669"/>
    <property type="project" value="InterPro"/>
</dbReference>
<dbReference type="GO" id="GO:0009398">
    <property type="term" value="P:FMN biosynthetic process"/>
    <property type="evidence" value="ECO:0007669"/>
    <property type="project" value="UniProtKB-UniRule"/>
</dbReference>
<dbReference type="GO" id="GO:0009231">
    <property type="term" value="P:riboflavin biosynthetic process"/>
    <property type="evidence" value="ECO:0007669"/>
    <property type="project" value="InterPro"/>
</dbReference>
<dbReference type="Gene3D" id="2.40.30.30">
    <property type="entry name" value="Riboflavin kinase-like"/>
    <property type="match status" value="1"/>
</dbReference>
<dbReference type="Gene3D" id="1.10.10.10">
    <property type="entry name" value="Winged helix-like DNA-binding domain superfamily/Winged helix DNA-binding domain"/>
    <property type="match status" value="1"/>
</dbReference>
<dbReference type="HAMAP" id="MF_01285">
    <property type="entry name" value="Riboflavin_kinase"/>
    <property type="match status" value="1"/>
</dbReference>
<dbReference type="InterPro" id="IPR039063">
    <property type="entry name" value="RibK_CTP-dep"/>
</dbReference>
<dbReference type="InterPro" id="IPR023470">
    <property type="entry name" value="Riboflavin_kinase_archaeal"/>
</dbReference>
<dbReference type="InterPro" id="IPR023602">
    <property type="entry name" value="Riboflavin_kinase_CTP-dep"/>
</dbReference>
<dbReference type="InterPro" id="IPR023465">
    <property type="entry name" value="Riboflavin_kinase_dom_sf"/>
</dbReference>
<dbReference type="InterPro" id="IPR036388">
    <property type="entry name" value="WH-like_DNA-bd_sf"/>
</dbReference>
<dbReference type="InterPro" id="IPR036390">
    <property type="entry name" value="WH_DNA-bd_sf"/>
</dbReference>
<dbReference type="PANTHER" id="PTHR40706">
    <property type="entry name" value="RIBOFLAVIN KINASE"/>
    <property type="match status" value="1"/>
</dbReference>
<dbReference type="PANTHER" id="PTHR40706:SF1">
    <property type="entry name" value="RIBOFLAVIN KINASE"/>
    <property type="match status" value="1"/>
</dbReference>
<dbReference type="Pfam" id="PF01982">
    <property type="entry name" value="CTP-dep_RFKase"/>
    <property type="match status" value="1"/>
</dbReference>
<dbReference type="Pfam" id="PF13412">
    <property type="entry name" value="HTH_24"/>
    <property type="match status" value="1"/>
</dbReference>
<dbReference type="SUPFAM" id="SSF82114">
    <property type="entry name" value="Riboflavin kinase-like"/>
    <property type="match status" value="1"/>
</dbReference>
<dbReference type="SUPFAM" id="SSF46785">
    <property type="entry name" value="Winged helix' DNA-binding domain"/>
    <property type="match status" value="1"/>
</dbReference>
<protein>
    <recommendedName>
        <fullName>Riboflavin kinase</fullName>
        <shortName>RFK</shortName>
        <ecNumber>2.7.1.161</ecNumber>
    </recommendedName>
    <alternativeName>
        <fullName>CTP-dependent riboflavin kinase</fullName>
    </alternativeName>
    <alternativeName>
        <fullName>CTP:riboflavin 5'-phosphotransferase</fullName>
    </alternativeName>
    <alternativeName>
        <fullName>Flavokinase</fullName>
    </alternativeName>
</protein>
<name>RIFK_METAR</name>
<proteinExistence type="inferred from homology"/>
<accession>Q0W6F7</accession>
<comment type="function">
    <text evidence="1">Catalyzes the CTP-dependent phosphorylation of riboflavin (vitamin B2) to form flavin mononucleotide (FMN).</text>
</comment>
<comment type="catalytic activity">
    <reaction>
        <text>riboflavin + CTP = CDP + FMN + H(+)</text>
        <dbReference type="Rhea" id="RHEA:25021"/>
        <dbReference type="ChEBI" id="CHEBI:15378"/>
        <dbReference type="ChEBI" id="CHEBI:37563"/>
        <dbReference type="ChEBI" id="CHEBI:57986"/>
        <dbReference type="ChEBI" id="CHEBI:58069"/>
        <dbReference type="ChEBI" id="CHEBI:58210"/>
        <dbReference type="EC" id="2.7.1.161"/>
    </reaction>
</comment>
<comment type="cofactor">
    <cofactor evidence="1">
        <name>Mg(2+)</name>
        <dbReference type="ChEBI" id="CHEBI:18420"/>
    </cofactor>
    <text evidence="1">Binds 1 Mg(2+) ion per subunit.</text>
</comment>
<comment type="pathway">
    <text>Cofactor biosynthesis; FMN biosynthesis; FMN from riboflavin (CTP route): step 1/1.</text>
</comment>
<comment type="similarity">
    <text evidence="2">Belongs to the archaeal riboflavin kinase family.</text>
</comment>